<feature type="chain" id="PRO_1000121256" description="DNA-directed RNA polymerase subunit omega">
    <location>
        <begin position="1"/>
        <end position="91"/>
    </location>
</feature>
<sequence>MARVTVQDAVEKIGNRFDLVLVAARRARQLQVGAKDPLVPEENDKMTVIALREIEEGLINGKILDARERQEQQEQEAAELQAVSAIAEGRR</sequence>
<evidence type="ECO:0000255" key="1">
    <source>
        <dbReference type="HAMAP-Rule" id="MF_00366"/>
    </source>
</evidence>
<protein>
    <recommendedName>
        <fullName evidence="1">DNA-directed RNA polymerase subunit omega</fullName>
        <shortName evidence="1">RNAP omega subunit</shortName>
        <ecNumber evidence="1">2.7.7.6</ecNumber>
    </recommendedName>
    <alternativeName>
        <fullName evidence="1">RNA polymerase omega subunit</fullName>
    </alternativeName>
    <alternativeName>
        <fullName evidence="1">Transcriptase subunit omega</fullName>
    </alternativeName>
</protein>
<proteinExistence type="inferred from homology"/>
<comment type="function">
    <text evidence="1">Promotes RNA polymerase assembly. Latches the N- and C-terminal regions of the beta' subunit thereby facilitating its interaction with the beta and alpha subunits.</text>
</comment>
<comment type="catalytic activity">
    <reaction evidence="1">
        <text>RNA(n) + a ribonucleoside 5'-triphosphate = RNA(n+1) + diphosphate</text>
        <dbReference type="Rhea" id="RHEA:21248"/>
        <dbReference type="Rhea" id="RHEA-COMP:14527"/>
        <dbReference type="Rhea" id="RHEA-COMP:17342"/>
        <dbReference type="ChEBI" id="CHEBI:33019"/>
        <dbReference type="ChEBI" id="CHEBI:61557"/>
        <dbReference type="ChEBI" id="CHEBI:140395"/>
        <dbReference type="EC" id="2.7.7.6"/>
    </reaction>
</comment>
<comment type="subunit">
    <text evidence="1">The RNAP catalytic core consists of 2 alpha, 1 beta, 1 beta' and 1 omega subunit. When a sigma factor is associated with the core the holoenzyme is formed, which can initiate transcription.</text>
</comment>
<comment type="similarity">
    <text evidence="1">Belongs to the RNA polymerase subunit omega family.</text>
</comment>
<name>RPOZ_PROMH</name>
<reference key="1">
    <citation type="journal article" date="2008" name="J. Bacteriol.">
        <title>Complete genome sequence of uropathogenic Proteus mirabilis, a master of both adherence and motility.</title>
        <authorList>
            <person name="Pearson M.M."/>
            <person name="Sebaihia M."/>
            <person name="Churcher C."/>
            <person name="Quail M.A."/>
            <person name="Seshasayee A.S."/>
            <person name="Luscombe N.M."/>
            <person name="Abdellah Z."/>
            <person name="Arrosmith C."/>
            <person name="Atkin B."/>
            <person name="Chillingworth T."/>
            <person name="Hauser H."/>
            <person name="Jagels K."/>
            <person name="Moule S."/>
            <person name="Mungall K."/>
            <person name="Norbertczak H."/>
            <person name="Rabbinowitsch E."/>
            <person name="Walker D."/>
            <person name="Whithead S."/>
            <person name="Thomson N.R."/>
            <person name="Rather P.N."/>
            <person name="Parkhill J."/>
            <person name="Mobley H.L.T."/>
        </authorList>
    </citation>
    <scope>NUCLEOTIDE SEQUENCE [LARGE SCALE GENOMIC DNA]</scope>
    <source>
        <strain>HI4320</strain>
    </source>
</reference>
<accession>B4EZA3</accession>
<gene>
    <name evidence="1" type="primary">rpoZ</name>
    <name type="ordered locus">PMI2863</name>
</gene>
<dbReference type="EC" id="2.7.7.6" evidence="1"/>
<dbReference type="EMBL" id="AM942759">
    <property type="protein sequence ID" value="CAR45639.1"/>
    <property type="molecule type" value="Genomic_DNA"/>
</dbReference>
<dbReference type="RefSeq" id="WP_004246820.1">
    <property type="nucleotide sequence ID" value="NC_010554.1"/>
</dbReference>
<dbReference type="SMR" id="B4EZA3"/>
<dbReference type="EnsemblBacteria" id="CAR45639">
    <property type="protein sequence ID" value="CAR45639"/>
    <property type="gene ID" value="PMI2863"/>
</dbReference>
<dbReference type="GeneID" id="83612836"/>
<dbReference type="KEGG" id="pmr:PMI2863"/>
<dbReference type="eggNOG" id="COG1758">
    <property type="taxonomic scope" value="Bacteria"/>
</dbReference>
<dbReference type="HOGENOM" id="CLU_125406_5_3_6"/>
<dbReference type="Proteomes" id="UP000008319">
    <property type="component" value="Chromosome"/>
</dbReference>
<dbReference type="GO" id="GO:0000428">
    <property type="term" value="C:DNA-directed RNA polymerase complex"/>
    <property type="evidence" value="ECO:0007669"/>
    <property type="project" value="UniProtKB-KW"/>
</dbReference>
<dbReference type="GO" id="GO:0003677">
    <property type="term" value="F:DNA binding"/>
    <property type="evidence" value="ECO:0007669"/>
    <property type="project" value="UniProtKB-UniRule"/>
</dbReference>
<dbReference type="GO" id="GO:0003899">
    <property type="term" value="F:DNA-directed RNA polymerase activity"/>
    <property type="evidence" value="ECO:0007669"/>
    <property type="project" value="UniProtKB-UniRule"/>
</dbReference>
<dbReference type="GO" id="GO:0006351">
    <property type="term" value="P:DNA-templated transcription"/>
    <property type="evidence" value="ECO:0007669"/>
    <property type="project" value="UniProtKB-UniRule"/>
</dbReference>
<dbReference type="FunFam" id="3.90.940.10:FF:000001">
    <property type="entry name" value="DNA-directed RNA polymerase subunit omega"/>
    <property type="match status" value="1"/>
</dbReference>
<dbReference type="Gene3D" id="3.90.940.10">
    <property type="match status" value="1"/>
</dbReference>
<dbReference type="HAMAP" id="MF_00366">
    <property type="entry name" value="RNApol_bact_RpoZ"/>
    <property type="match status" value="1"/>
</dbReference>
<dbReference type="InterPro" id="IPR003716">
    <property type="entry name" value="DNA-dir_RNA_pol_omega"/>
</dbReference>
<dbReference type="InterPro" id="IPR006110">
    <property type="entry name" value="Pol_omega/Rpo6/RPB6"/>
</dbReference>
<dbReference type="InterPro" id="IPR036161">
    <property type="entry name" value="RPB6/omega-like_sf"/>
</dbReference>
<dbReference type="NCBIfam" id="TIGR00690">
    <property type="entry name" value="rpoZ"/>
    <property type="match status" value="1"/>
</dbReference>
<dbReference type="PANTHER" id="PTHR34476">
    <property type="entry name" value="DNA-DIRECTED RNA POLYMERASE SUBUNIT OMEGA"/>
    <property type="match status" value="1"/>
</dbReference>
<dbReference type="PANTHER" id="PTHR34476:SF1">
    <property type="entry name" value="DNA-DIRECTED RNA POLYMERASE SUBUNIT OMEGA"/>
    <property type="match status" value="1"/>
</dbReference>
<dbReference type="Pfam" id="PF01192">
    <property type="entry name" value="RNA_pol_Rpb6"/>
    <property type="match status" value="1"/>
</dbReference>
<dbReference type="SMART" id="SM01409">
    <property type="entry name" value="RNA_pol_Rpb6"/>
    <property type="match status" value="1"/>
</dbReference>
<dbReference type="SUPFAM" id="SSF63562">
    <property type="entry name" value="RPB6/omega subunit-like"/>
    <property type="match status" value="1"/>
</dbReference>
<keyword id="KW-0240">DNA-directed RNA polymerase</keyword>
<keyword id="KW-0548">Nucleotidyltransferase</keyword>
<keyword id="KW-1185">Reference proteome</keyword>
<keyword id="KW-0804">Transcription</keyword>
<keyword id="KW-0808">Transferase</keyword>
<organism>
    <name type="scientific">Proteus mirabilis (strain HI4320)</name>
    <dbReference type="NCBI Taxonomy" id="529507"/>
    <lineage>
        <taxon>Bacteria</taxon>
        <taxon>Pseudomonadati</taxon>
        <taxon>Pseudomonadota</taxon>
        <taxon>Gammaproteobacteria</taxon>
        <taxon>Enterobacterales</taxon>
        <taxon>Morganellaceae</taxon>
        <taxon>Proteus</taxon>
    </lineage>
</organism>